<organism>
    <name type="scientific">Haemophilus influenzae (strain ATCC 51907 / DSM 11121 / KW20 / Rd)</name>
    <dbReference type="NCBI Taxonomy" id="71421"/>
    <lineage>
        <taxon>Bacteria</taxon>
        <taxon>Pseudomonadati</taxon>
        <taxon>Pseudomonadota</taxon>
        <taxon>Gammaproteobacteria</taxon>
        <taxon>Pasteurellales</taxon>
        <taxon>Pasteurellaceae</taxon>
        <taxon>Haemophilus</taxon>
    </lineage>
</organism>
<sequence length="397" mass="43667">MQKQNIVILGSTGSIGKSTLSVIENNPQKYHAFALVGGKNVEAMFEQCIKFRPHFAALDDVNAAKILREKLIAHHIPTEVLAGRRAICELAAHPDADQIMASIVGAAGLLPTLSAVKAGKRVLLANKESLVTCGQLFIDAVKNYGSKLLPVDSEHNAIFQSLPPEAQEKIGFCPLSELGVSKIILTGSGGPFRYTPLEQFTNITPEQAVAHPNWSMGKKISVDSATMMNKGLEYIEARWLFNASAEEMEVIIHPQSIIHSMVRYVDGSVITQMGNPDMRTPIAETMAYPHRTFAGVEPLDFFKIKELTFIEPDFNRYPNLKLAIDAFAAGQYATTAMNAANEIAVQAFLDRQIGFMDIAKINSKTIERISPYTIQNIDDVLEIDAQAREIAKTLLRE</sequence>
<evidence type="ECO:0000255" key="1">
    <source>
        <dbReference type="HAMAP-Rule" id="MF_00183"/>
    </source>
</evidence>
<keyword id="KW-0414">Isoprene biosynthesis</keyword>
<keyword id="KW-0464">Manganese</keyword>
<keyword id="KW-0479">Metal-binding</keyword>
<keyword id="KW-0521">NADP</keyword>
<keyword id="KW-0560">Oxidoreductase</keyword>
<keyword id="KW-1185">Reference proteome</keyword>
<gene>
    <name evidence="1" type="primary">dxr</name>
    <name type="ordered locus">HI_0807</name>
</gene>
<dbReference type="EC" id="1.1.1.267" evidence="1"/>
<dbReference type="EMBL" id="L42023">
    <property type="protein sequence ID" value="AAC22466.1"/>
    <property type="molecule type" value="Genomic_DNA"/>
</dbReference>
<dbReference type="PIR" id="A64014">
    <property type="entry name" value="A64014"/>
</dbReference>
<dbReference type="RefSeq" id="NP_438967.1">
    <property type="nucleotide sequence ID" value="NC_000907.1"/>
</dbReference>
<dbReference type="SMR" id="P44055"/>
<dbReference type="STRING" id="71421.HI_0807"/>
<dbReference type="EnsemblBacteria" id="AAC22466">
    <property type="protein sequence ID" value="AAC22466"/>
    <property type="gene ID" value="HI_0807"/>
</dbReference>
<dbReference type="KEGG" id="hin:HI_0807"/>
<dbReference type="PATRIC" id="fig|71421.8.peg.848"/>
<dbReference type="eggNOG" id="COG0743">
    <property type="taxonomic scope" value="Bacteria"/>
</dbReference>
<dbReference type="HOGENOM" id="CLU_035714_4_0_6"/>
<dbReference type="OrthoDB" id="9806546at2"/>
<dbReference type="PhylomeDB" id="P44055"/>
<dbReference type="BioCyc" id="HINF71421:G1GJ1-848-MONOMER"/>
<dbReference type="UniPathway" id="UPA00056">
    <property type="reaction ID" value="UER00092"/>
</dbReference>
<dbReference type="Proteomes" id="UP000000579">
    <property type="component" value="Chromosome"/>
</dbReference>
<dbReference type="GO" id="GO:0030604">
    <property type="term" value="F:1-deoxy-D-xylulose-5-phosphate reductoisomerase activity"/>
    <property type="evidence" value="ECO:0000318"/>
    <property type="project" value="GO_Central"/>
</dbReference>
<dbReference type="GO" id="GO:0030145">
    <property type="term" value="F:manganese ion binding"/>
    <property type="evidence" value="ECO:0000318"/>
    <property type="project" value="GO_Central"/>
</dbReference>
<dbReference type="GO" id="GO:0070402">
    <property type="term" value="F:NADPH binding"/>
    <property type="evidence" value="ECO:0000318"/>
    <property type="project" value="GO_Central"/>
</dbReference>
<dbReference type="GO" id="GO:0051484">
    <property type="term" value="P:isopentenyl diphosphate biosynthetic process, methylerythritol 4-phosphate pathway involved in terpenoid biosynthetic process"/>
    <property type="evidence" value="ECO:0000318"/>
    <property type="project" value="GO_Central"/>
</dbReference>
<dbReference type="FunFam" id="1.10.1740.10:FF:000004">
    <property type="entry name" value="1-deoxy-D-xylulose 5-phosphate reductoisomerase"/>
    <property type="match status" value="1"/>
</dbReference>
<dbReference type="FunFam" id="3.40.50.720:FF:000045">
    <property type="entry name" value="1-deoxy-D-xylulose 5-phosphate reductoisomerase"/>
    <property type="match status" value="1"/>
</dbReference>
<dbReference type="Gene3D" id="1.10.1740.10">
    <property type="match status" value="1"/>
</dbReference>
<dbReference type="Gene3D" id="3.40.50.720">
    <property type="entry name" value="NAD(P)-binding Rossmann-like Domain"/>
    <property type="match status" value="1"/>
</dbReference>
<dbReference type="HAMAP" id="MF_00183">
    <property type="entry name" value="DXP_reductoisom"/>
    <property type="match status" value="1"/>
</dbReference>
<dbReference type="InterPro" id="IPR003821">
    <property type="entry name" value="DXP_reductoisomerase"/>
</dbReference>
<dbReference type="InterPro" id="IPR013644">
    <property type="entry name" value="DXP_reductoisomerase_C"/>
</dbReference>
<dbReference type="InterPro" id="IPR013512">
    <property type="entry name" value="DXP_reductoisomerase_N"/>
</dbReference>
<dbReference type="InterPro" id="IPR026877">
    <property type="entry name" value="DXPR_C"/>
</dbReference>
<dbReference type="InterPro" id="IPR036169">
    <property type="entry name" value="DXPR_C_sf"/>
</dbReference>
<dbReference type="InterPro" id="IPR036291">
    <property type="entry name" value="NAD(P)-bd_dom_sf"/>
</dbReference>
<dbReference type="NCBIfam" id="TIGR00243">
    <property type="entry name" value="Dxr"/>
    <property type="match status" value="1"/>
</dbReference>
<dbReference type="NCBIfam" id="NF003938">
    <property type="entry name" value="PRK05447.1-1"/>
    <property type="match status" value="1"/>
</dbReference>
<dbReference type="NCBIfam" id="NF009114">
    <property type="entry name" value="PRK12464.1"/>
    <property type="match status" value="1"/>
</dbReference>
<dbReference type="PANTHER" id="PTHR30525">
    <property type="entry name" value="1-DEOXY-D-XYLULOSE 5-PHOSPHATE REDUCTOISOMERASE"/>
    <property type="match status" value="1"/>
</dbReference>
<dbReference type="PANTHER" id="PTHR30525:SF0">
    <property type="entry name" value="1-DEOXY-D-XYLULOSE 5-PHOSPHATE REDUCTOISOMERASE, CHLOROPLASTIC"/>
    <property type="match status" value="1"/>
</dbReference>
<dbReference type="Pfam" id="PF08436">
    <property type="entry name" value="DXP_redisom_C"/>
    <property type="match status" value="1"/>
</dbReference>
<dbReference type="Pfam" id="PF02670">
    <property type="entry name" value="DXP_reductoisom"/>
    <property type="match status" value="1"/>
</dbReference>
<dbReference type="Pfam" id="PF13288">
    <property type="entry name" value="DXPR_C"/>
    <property type="match status" value="1"/>
</dbReference>
<dbReference type="PIRSF" id="PIRSF006205">
    <property type="entry name" value="Dxp_reductismrs"/>
    <property type="match status" value="1"/>
</dbReference>
<dbReference type="SUPFAM" id="SSF69055">
    <property type="entry name" value="1-deoxy-D-xylulose-5-phosphate reductoisomerase, C-terminal domain"/>
    <property type="match status" value="1"/>
</dbReference>
<dbReference type="SUPFAM" id="SSF55347">
    <property type="entry name" value="Glyceraldehyde-3-phosphate dehydrogenase-like, C-terminal domain"/>
    <property type="match status" value="1"/>
</dbReference>
<dbReference type="SUPFAM" id="SSF51735">
    <property type="entry name" value="NAD(P)-binding Rossmann-fold domains"/>
    <property type="match status" value="1"/>
</dbReference>
<accession>P44055</accession>
<feature type="chain" id="PRO_0000163660" description="1-deoxy-D-xylulose 5-phosphate reductoisomerase">
    <location>
        <begin position="1"/>
        <end position="397"/>
    </location>
</feature>
<feature type="binding site" evidence="1">
    <location>
        <position position="12"/>
    </location>
    <ligand>
        <name>NADPH</name>
        <dbReference type="ChEBI" id="CHEBI:57783"/>
    </ligand>
</feature>
<feature type="binding site" evidence="1">
    <location>
        <position position="13"/>
    </location>
    <ligand>
        <name>NADPH</name>
        <dbReference type="ChEBI" id="CHEBI:57783"/>
    </ligand>
</feature>
<feature type="binding site" evidence="1">
    <location>
        <position position="14"/>
    </location>
    <ligand>
        <name>NADPH</name>
        <dbReference type="ChEBI" id="CHEBI:57783"/>
    </ligand>
</feature>
<feature type="binding site" evidence="1">
    <location>
        <position position="15"/>
    </location>
    <ligand>
        <name>NADPH</name>
        <dbReference type="ChEBI" id="CHEBI:57783"/>
    </ligand>
</feature>
<feature type="binding site" evidence="1">
    <location>
        <position position="38"/>
    </location>
    <ligand>
        <name>NADPH</name>
        <dbReference type="ChEBI" id="CHEBI:57783"/>
    </ligand>
</feature>
<feature type="binding site" evidence="1">
    <location>
        <position position="39"/>
    </location>
    <ligand>
        <name>NADPH</name>
        <dbReference type="ChEBI" id="CHEBI:57783"/>
    </ligand>
</feature>
<feature type="binding site" evidence="1">
    <location>
        <position position="40"/>
    </location>
    <ligand>
        <name>NADPH</name>
        <dbReference type="ChEBI" id="CHEBI:57783"/>
    </ligand>
</feature>
<feature type="binding site" evidence="1">
    <location>
        <position position="126"/>
    </location>
    <ligand>
        <name>NADPH</name>
        <dbReference type="ChEBI" id="CHEBI:57783"/>
    </ligand>
</feature>
<feature type="binding site" evidence="1">
    <location>
        <position position="127"/>
    </location>
    <ligand>
        <name>1-deoxy-D-xylulose 5-phosphate</name>
        <dbReference type="ChEBI" id="CHEBI:57792"/>
    </ligand>
</feature>
<feature type="binding site" evidence="1">
    <location>
        <position position="128"/>
    </location>
    <ligand>
        <name>NADPH</name>
        <dbReference type="ChEBI" id="CHEBI:57783"/>
    </ligand>
</feature>
<feature type="binding site" evidence="1">
    <location>
        <position position="152"/>
    </location>
    <ligand>
        <name>Mn(2+)</name>
        <dbReference type="ChEBI" id="CHEBI:29035"/>
    </ligand>
</feature>
<feature type="binding site" evidence="1">
    <location>
        <position position="153"/>
    </location>
    <ligand>
        <name>1-deoxy-D-xylulose 5-phosphate</name>
        <dbReference type="ChEBI" id="CHEBI:57792"/>
    </ligand>
</feature>
<feature type="binding site" evidence="1">
    <location>
        <position position="154"/>
    </location>
    <ligand>
        <name>1-deoxy-D-xylulose 5-phosphate</name>
        <dbReference type="ChEBI" id="CHEBI:57792"/>
    </ligand>
</feature>
<feature type="binding site" evidence="1">
    <location>
        <position position="154"/>
    </location>
    <ligand>
        <name>Mn(2+)</name>
        <dbReference type="ChEBI" id="CHEBI:29035"/>
    </ligand>
</feature>
<feature type="binding site" evidence="1">
    <location>
        <position position="188"/>
    </location>
    <ligand>
        <name>1-deoxy-D-xylulose 5-phosphate</name>
        <dbReference type="ChEBI" id="CHEBI:57792"/>
    </ligand>
</feature>
<feature type="binding site" evidence="1">
    <location>
        <position position="211"/>
    </location>
    <ligand>
        <name>1-deoxy-D-xylulose 5-phosphate</name>
        <dbReference type="ChEBI" id="CHEBI:57792"/>
    </ligand>
</feature>
<feature type="binding site" evidence="1">
    <location>
        <position position="217"/>
    </location>
    <ligand>
        <name>NADPH</name>
        <dbReference type="ChEBI" id="CHEBI:57783"/>
    </ligand>
</feature>
<feature type="binding site" evidence="1">
    <location>
        <position position="224"/>
    </location>
    <ligand>
        <name>1-deoxy-D-xylulose 5-phosphate</name>
        <dbReference type="ChEBI" id="CHEBI:57792"/>
    </ligand>
</feature>
<feature type="binding site" evidence="1">
    <location>
        <position position="229"/>
    </location>
    <ligand>
        <name>1-deoxy-D-xylulose 5-phosphate</name>
        <dbReference type="ChEBI" id="CHEBI:57792"/>
    </ligand>
</feature>
<feature type="binding site" evidence="1">
    <location>
        <position position="230"/>
    </location>
    <ligand>
        <name>1-deoxy-D-xylulose 5-phosphate</name>
        <dbReference type="ChEBI" id="CHEBI:57792"/>
    </ligand>
</feature>
<feature type="binding site" evidence="1">
    <location>
        <position position="233"/>
    </location>
    <ligand>
        <name>1-deoxy-D-xylulose 5-phosphate</name>
        <dbReference type="ChEBI" id="CHEBI:57792"/>
    </ligand>
</feature>
<feature type="binding site" evidence="1">
    <location>
        <position position="233"/>
    </location>
    <ligand>
        <name>Mn(2+)</name>
        <dbReference type="ChEBI" id="CHEBI:29035"/>
    </ligand>
</feature>
<protein>
    <recommendedName>
        <fullName evidence="1">1-deoxy-D-xylulose 5-phosphate reductoisomerase</fullName>
        <shortName evidence="1">DXP reductoisomerase</shortName>
        <ecNumber evidence="1">1.1.1.267</ecNumber>
    </recommendedName>
    <alternativeName>
        <fullName evidence="1">1-deoxyxylulose-5-phosphate reductoisomerase</fullName>
    </alternativeName>
    <alternativeName>
        <fullName evidence="1">2-C-methyl-D-erythritol 4-phosphate synthase</fullName>
    </alternativeName>
</protein>
<comment type="function">
    <text evidence="1">Catalyzes the NADPH-dependent rearrangement and reduction of 1-deoxy-D-xylulose-5-phosphate (DXP) to 2-C-methyl-D-erythritol 4-phosphate (MEP).</text>
</comment>
<comment type="catalytic activity">
    <reaction evidence="1">
        <text>2-C-methyl-D-erythritol 4-phosphate + NADP(+) = 1-deoxy-D-xylulose 5-phosphate + NADPH + H(+)</text>
        <dbReference type="Rhea" id="RHEA:13717"/>
        <dbReference type="ChEBI" id="CHEBI:15378"/>
        <dbReference type="ChEBI" id="CHEBI:57783"/>
        <dbReference type="ChEBI" id="CHEBI:57792"/>
        <dbReference type="ChEBI" id="CHEBI:58262"/>
        <dbReference type="ChEBI" id="CHEBI:58349"/>
        <dbReference type="EC" id="1.1.1.267"/>
    </reaction>
    <physiologicalReaction direction="right-to-left" evidence="1">
        <dbReference type="Rhea" id="RHEA:13719"/>
    </physiologicalReaction>
</comment>
<comment type="cofactor">
    <cofactor evidence="1">
        <name>Mg(2+)</name>
        <dbReference type="ChEBI" id="CHEBI:18420"/>
    </cofactor>
    <cofactor evidence="1">
        <name>Mn(2+)</name>
        <dbReference type="ChEBI" id="CHEBI:29035"/>
    </cofactor>
</comment>
<comment type="pathway">
    <text evidence="1">Isoprenoid biosynthesis; isopentenyl diphosphate biosynthesis via DXP pathway; isopentenyl diphosphate from 1-deoxy-D-xylulose 5-phosphate: step 1/6.</text>
</comment>
<comment type="similarity">
    <text evidence="1">Belongs to the DXR family.</text>
</comment>
<name>DXR_HAEIN</name>
<proteinExistence type="inferred from homology"/>
<reference key="1">
    <citation type="journal article" date="1995" name="Science">
        <title>Whole-genome random sequencing and assembly of Haemophilus influenzae Rd.</title>
        <authorList>
            <person name="Fleischmann R.D."/>
            <person name="Adams M.D."/>
            <person name="White O."/>
            <person name="Clayton R.A."/>
            <person name="Kirkness E.F."/>
            <person name="Kerlavage A.R."/>
            <person name="Bult C.J."/>
            <person name="Tomb J.-F."/>
            <person name="Dougherty B.A."/>
            <person name="Merrick J.M."/>
            <person name="McKenney K."/>
            <person name="Sutton G.G."/>
            <person name="FitzHugh W."/>
            <person name="Fields C.A."/>
            <person name="Gocayne J.D."/>
            <person name="Scott J.D."/>
            <person name="Shirley R."/>
            <person name="Liu L.-I."/>
            <person name="Glodek A."/>
            <person name="Kelley J.M."/>
            <person name="Weidman J.F."/>
            <person name="Phillips C.A."/>
            <person name="Spriggs T."/>
            <person name="Hedblom E."/>
            <person name="Cotton M.D."/>
            <person name="Utterback T.R."/>
            <person name="Hanna M.C."/>
            <person name="Nguyen D.T."/>
            <person name="Saudek D.M."/>
            <person name="Brandon R.C."/>
            <person name="Fine L.D."/>
            <person name="Fritchman J.L."/>
            <person name="Fuhrmann J.L."/>
            <person name="Geoghagen N.S.M."/>
            <person name="Gnehm C.L."/>
            <person name="McDonald L.A."/>
            <person name="Small K.V."/>
            <person name="Fraser C.M."/>
            <person name="Smith H.O."/>
            <person name="Venter J.C."/>
        </authorList>
    </citation>
    <scope>NUCLEOTIDE SEQUENCE [LARGE SCALE GENOMIC DNA]</scope>
    <source>
        <strain>ATCC 51907 / DSM 11121 / KW20 / Rd</strain>
    </source>
</reference>